<proteinExistence type="inferred from homology"/>
<gene>
    <name evidence="1" type="primary">pcm</name>
    <name type="ordered locus">Jann_1067</name>
</gene>
<name>PIMT_JANSC</name>
<accession>Q28TH8</accession>
<protein>
    <recommendedName>
        <fullName evidence="1">Protein-L-isoaspartate O-methyltransferase</fullName>
        <ecNumber evidence="1">2.1.1.77</ecNumber>
    </recommendedName>
    <alternativeName>
        <fullName evidence="1">L-isoaspartyl protein carboxyl methyltransferase</fullName>
    </alternativeName>
    <alternativeName>
        <fullName evidence="1">Protein L-isoaspartyl methyltransferase</fullName>
    </alternativeName>
    <alternativeName>
        <fullName evidence="1">Protein-beta-aspartate methyltransferase</fullName>
        <shortName evidence="1">PIMT</shortName>
    </alternativeName>
</protein>
<sequence>MSDLGRGEGTGFDAERKMQFLYQLRQKGVMDKRVLTAMEHVDRGAFVRGHFASRAYEDVPLPISSGQTISQPSVVGLMTQALNVQPRDTVLEVGTGSGYQAAILSHLARRIYTIDRHRNLTREAEIIFTRMGLVNITVLTRDGSFGLPDQGPFDRILITAAAEDPPGPLLQQLKVGGVMVVPVGQSDTVQSLIKVTRLETGFDYDELMPVRFVPLVEGTARD</sequence>
<comment type="function">
    <text evidence="1">Catalyzes the methyl esterification of L-isoaspartyl residues in peptides and proteins that result from spontaneous decomposition of normal L-aspartyl and L-asparaginyl residues. It plays a role in the repair and/or degradation of damaged proteins.</text>
</comment>
<comment type="catalytic activity">
    <reaction evidence="1">
        <text>[protein]-L-isoaspartate + S-adenosyl-L-methionine = [protein]-L-isoaspartate alpha-methyl ester + S-adenosyl-L-homocysteine</text>
        <dbReference type="Rhea" id="RHEA:12705"/>
        <dbReference type="Rhea" id="RHEA-COMP:12143"/>
        <dbReference type="Rhea" id="RHEA-COMP:12144"/>
        <dbReference type="ChEBI" id="CHEBI:57856"/>
        <dbReference type="ChEBI" id="CHEBI:59789"/>
        <dbReference type="ChEBI" id="CHEBI:90596"/>
        <dbReference type="ChEBI" id="CHEBI:90598"/>
        <dbReference type="EC" id="2.1.1.77"/>
    </reaction>
</comment>
<comment type="subcellular location">
    <subcellularLocation>
        <location evidence="1">Cytoplasm</location>
    </subcellularLocation>
</comment>
<comment type="similarity">
    <text evidence="1">Belongs to the methyltransferase superfamily. L-isoaspartyl/D-aspartyl protein methyltransferase family.</text>
</comment>
<keyword id="KW-0963">Cytoplasm</keyword>
<keyword id="KW-0489">Methyltransferase</keyword>
<keyword id="KW-1185">Reference proteome</keyword>
<keyword id="KW-0949">S-adenosyl-L-methionine</keyword>
<keyword id="KW-0808">Transferase</keyword>
<evidence type="ECO:0000255" key="1">
    <source>
        <dbReference type="HAMAP-Rule" id="MF_00090"/>
    </source>
</evidence>
<organism>
    <name type="scientific">Jannaschia sp. (strain CCS1)</name>
    <dbReference type="NCBI Taxonomy" id="290400"/>
    <lineage>
        <taxon>Bacteria</taxon>
        <taxon>Pseudomonadati</taxon>
        <taxon>Pseudomonadota</taxon>
        <taxon>Alphaproteobacteria</taxon>
        <taxon>Rhodobacterales</taxon>
        <taxon>Roseobacteraceae</taxon>
        <taxon>Jannaschia</taxon>
    </lineage>
</organism>
<dbReference type="EC" id="2.1.1.77" evidence="1"/>
<dbReference type="EMBL" id="CP000264">
    <property type="protein sequence ID" value="ABD53984.1"/>
    <property type="molecule type" value="Genomic_DNA"/>
</dbReference>
<dbReference type="RefSeq" id="WP_011454191.1">
    <property type="nucleotide sequence ID" value="NC_007802.1"/>
</dbReference>
<dbReference type="SMR" id="Q28TH8"/>
<dbReference type="STRING" id="290400.Jann_1067"/>
<dbReference type="KEGG" id="jan:Jann_1067"/>
<dbReference type="eggNOG" id="COG2518">
    <property type="taxonomic scope" value="Bacteria"/>
</dbReference>
<dbReference type="HOGENOM" id="CLU_055432_2_0_5"/>
<dbReference type="OrthoDB" id="9810066at2"/>
<dbReference type="Proteomes" id="UP000008326">
    <property type="component" value="Chromosome"/>
</dbReference>
<dbReference type="GO" id="GO:0005737">
    <property type="term" value="C:cytoplasm"/>
    <property type="evidence" value="ECO:0007669"/>
    <property type="project" value="UniProtKB-SubCell"/>
</dbReference>
<dbReference type="GO" id="GO:0004719">
    <property type="term" value="F:protein-L-isoaspartate (D-aspartate) O-methyltransferase activity"/>
    <property type="evidence" value="ECO:0007669"/>
    <property type="project" value="UniProtKB-UniRule"/>
</dbReference>
<dbReference type="GO" id="GO:0032259">
    <property type="term" value="P:methylation"/>
    <property type="evidence" value="ECO:0007669"/>
    <property type="project" value="UniProtKB-KW"/>
</dbReference>
<dbReference type="GO" id="GO:0036211">
    <property type="term" value="P:protein modification process"/>
    <property type="evidence" value="ECO:0007669"/>
    <property type="project" value="UniProtKB-UniRule"/>
</dbReference>
<dbReference type="GO" id="GO:0030091">
    <property type="term" value="P:protein repair"/>
    <property type="evidence" value="ECO:0007669"/>
    <property type="project" value="UniProtKB-UniRule"/>
</dbReference>
<dbReference type="CDD" id="cd02440">
    <property type="entry name" value="AdoMet_MTases"/>
    <property type="match status" value="1"/>
</dbReference>
<dbReference type="FunFam" id="3.40.50.150:FF:000010">
    <property type="entry name" value="Protein-L-isoaspartate O-methyltransferase"/>
    <property type="match status" value="1"/>
</dbReference>
<dbReference type="Gene3D" id="3.40.50.150">
    <property type="entry name" value="Vaccinia Virus protein VP39"/>
    <property type="match status" value="1"/>
</dbReference>
<dbReference type="HAMAP" id="MF_00090">
    <property type="entry name" value="PIMT"/>
    <property type="match status" value="1"/>
</dbReference>
<dbReference type="InterPro" id="IPR000682">
    <property type="entry name" value="PCMT"/>
</dbReference>
<dbReference type="InterPro" id="IPR029063">
    <property type="entry name" value="SAM-dependent_MTases_sf"/>
</dbReference>
<dbReference type="NCBIfam" id="TIGR00080">
    <property type="entry name" value="pimt"/>
    <property type="match status" value="1"/>
</dbReference>
<dbReference type="NCBIfam" id="NF001453">
    <property type="entry name" value="PRK00312.1"/>
    <property type="match status" value="1"/>
</dbReference>
<dbReference type="PANTHER" id="PTHR11579">
    <property type="entry name" value="PROTEIN-L-ISOASPARTATE O-METHYLTRANSFERASE"/>
    <property type="match status" value="1"/>
</dbReference>
<dbReference type="PANTHER" id="PTHR11579:SF0">
    <property type="entry name" value="PROTEIN-L-ISOASPARTATE(D-ASPARTATE) O-METHYLTRANSFERASE"/>
    <property type="match status" value="1"/>
</dbReference>
<dbReference type="Pfam" id="PF01135">
    <property type="entry name" value="PCMT"/>
    <property type="match status" value="1"/>
</dbReference>
<dbReference type="SUPFAM" id="SSF53335">
    <property type="entry name" value="S-adenosyl-L-methionine-dependent methyltransferases"/>
    <property type="match status" value="1"/>
</dbReference>
<feature type="chain" id="PRO_0000351869" description="Protein-L-isoaspartate O-methyltransferase">
    <location>
        <begin position="1"/>
        <end position="222"/>
    </location>
</feature>
<feature type="active site" evidence="1">
    <location>
        <position position="70"/>
    </location>
</feature>
<reference key="1">
    <citation type="submission" date="2006-02" db="EMBL/GenBank/DDBJ databases">
        <title>Complete sequence of chromosome of Jannaschia sp. CCS1.</title>
        <authorList>
            <consortium name="US DOE Joint Genome Institute"/>
            <person name="Copeland A."/>
            <person name="Lucas S."/>
            <person name="Lapidus A."/>
            <person name="Barry K."/>
            <person name="Detter J.C."/>
            <person name="Glavina del Rio T."/>
            <person name="Hammon N."/>
            <person name="Israni S."/>
            <person name="Pitluck S."/>
            <person name="Brettin T."/>
            <person name="Bruce D."/>
            <person name="Han C."/>
            <person name="Tapia R."/>
            <person name="Gilna P."/>
            <person name="Chertkov O."/>
            <person name="Saunders E."/>
            <person name="Schmutz J."/>
            <person name="Larimer F."/>
            <person name="Land M."/>
            <person name="Kyrpides N."/>
            <person name="Lykidis A."/>
            <person name="Moran M.A."/>
            <person name="Belas R."/>
            <person name="Ye W."/>
            <person name="Buchan A."/>
            <person name="Gonzalez J.M."/>
            <person name="Schell M.A."/>
            <person name="Richardson P."/>
        </authorList>
    </citation>
    <scope>NUCLEOTIDE SEQUENCE [LARGE SCALE GENOMIC DNA]</scope>
    <source>
        <strain>CCS1</strain>
    </source>
</reference>